<feature type="initiator methionine" description="Removed" evidence="1">
    <location>
        <position position="1"/>
    </location>
</feature>
<feature type="chain" id="PRO_0000340026" description="Photosystem II protein D1" evidence="1">
    <location>
        <begin position="2"/>
        <end position="344"/>
    </location>
</feature>
<feature type="propeptide" id="PRO_0000340027" evidence="1">
    <location>
        <begin position="345"/>
        <end position="353"/>
    </location>
</feature>
<feature type="transmembrane region" description="Helical" evidence="1">
    <location>
        <begin position="29"/>
        <end position="46"/>
    </location>
</feature>
<feature type="transmembrane region" description="Helical" evidence="1">
    <location>
        <begin position="118"/>
        <end position="133"/>
    </location>
</feature>
<feature type="transmembrane region" description="Helical" evidence="1">
    <location>
        <begin position="142"/>
        <end position="156"/>
    </location>
</feature>
<feature type="transmembrane region" description="Helical" evidence="1">
    <location>
        <begin position="197"/>
        <end position="218"/>
    </location>
</feature>
<feature type="transmembrane region" description="Helical" evidence="1">
    <location>
        <begin position="274"/>
        <end position="288"/>
    </location>
</feature>
<feature type="binding site" description="axial binding residue" evidence="1">
    <location>
        <position position="118"/>
    </location>
    <ligand>
        <name>chlorophyll a</name>
        <dbReference type="ChEBI" id="CHEBI:58416"/>
        <label>ChlzD1</label>
    </ligand>
    <ligandPart>
        <name>Mg</name>
        <dbReference type="ChEBI" id="CHEBI:25107"/>
    </ligandPart>
</feature>
<feature type="binding site" evidence="1">
    <location>
        <position position="126"/>
    </location>
    <ligand>
        <name>pheophytin a</name>
        <dbReference type="ChEBI" id="CHEBI:136840"/>
        <label>D1</label>
    </ligand>
</feature>
<feature type="binding site" evidence="1">
    <location>
        <position position="170"/>
    </location>
    <ligand>
        <name>[CaMn4O5] cluster</name>
        <dbReference type="ChEBI" id="CHEBI:189552"/>
    </ligand>
</feature>
<feature type="binding site" evidence="1">
    <location>
        <position position="189"/>
    </location>
    <ligand>
        <name>[CaMn4O5] cluster</name>
        <dbReference type="ChEBI" id="CHEBI:189552"/>
    </ligand>
</feature>
<feature type="binding site" description="axial binding residue" evidence="1">
    <location>
        <position position="198"/>
    </location>
    <ligand>
        <name>chlorophyll a</name>
        <dbReference type="ChEBI" id="CHEBI:58416"/>
        <label>PD1</label>
    </ligand>
    <ligandPart>
        <name>Mg</name>
        <dbReference type="ChEBI" id="CHEBI:25107"/>
    </ligandPart>
</feature>
<feature type="binding site" evidence="1">
    <location>
        <position position="215"/>
    </location>
    <ligand>
        <name>a quinone</name>
        <dbReference type="ChEBI" id="CHEBI:132124"/>
        <label>B</label>
    </ligand>
</feature>
<feature type="binding site" evidence="1">
    <location>
        <position position="215"/>
    </location>
    <ligand>
        <name>Fe cation</name>
        <dbReference type="ChEBI" id="CHEBI:24875"/>
        <note>ligand shared with heterodimeric partner</note>
    </ligand>
</feature>
<feature type="binding site" evidence="1">
    <location>
        <begin position="264"/>
        <end position="265"/>
    </location>
    <ligand>
        <name>a quinone</name>
        <dbReference type="ChEBI" id="CHEBI:132124"/>
        <label>B</label>
    </ligand>
</feature>
<feature type="binding site" evidence="1">
    <location>
        <position position="272"/>
    </location>
    <ligand>
        <name>Fe cation</name>
        <dbReference type="ChEBI" id="CHEBI:24875"/>
        <note>ligand shared with heterodimeric partner</note>
    </ligand>
</feature>
<feature type="binding site" evidence="1">
    <location>
        <position position="332"/>
    </location>
    <ligand>
        <name>[CaMn4O5] cluster</name>
        <dbReference type="ChEBI" id="CHEBI:189552"/>
    </ligand>
</feature>
<feature type="binding site" evidence="1">
    <location>
        <position position="333"/>
    </location>
    <ligand>
        <name>[CaMn4O5] cluster</name>
        <dbReference type="ChEBI" id="CHEBI:189552"/>
    </ligand>
</feature>
<feature type="binding site" evidence="1">
    <location>
        <position position="342"/>
    </location>
    <ligand>
        <name>[CaMn4O5] cluster</name>
        <dbReference type="ChEBI" id="CHEBI:189552"/>
    </ligand>
</feature>
<feature type="binding site" evidence="1">
    <location>
        <position position="344"/>
    </location>
    <ligand>
        <name>[CaMn4O5] cluster</name>
        <dbReference type="ChEBI" id="CHEBI:189552"/>
    </ligand>
</feature>
<feature type="site" description="Tyrosine radical intermediate" evidence="1">
    <location>
        <position position="161"/>
    </location>
</feature>
<feature type="site" description="Stabilizes free radical intermediate" evidence="1">
    <location>
        <position position="190"/>
    </location>
</feature>
<feature type="site" description="Cleavage; by CTPA" evidence="1">
    <location>
        <begin position="344"/>
        <end position="345"/>
    </location>
</feature>
<feature type="modified residue" description="N-acetylthreonine" evidence="1">
    <location>
        <position position="2"/>
    </location>
</feature>
<feature type="modified residue" description="Phosphothreonine" evidence="1">
    <location>
        <position position="2"/>
    </location>
</feature>
<evidence type="ECO:0000255" key="1">
    <source>
        <dbReference type="HAMAP-Rule" id="MF_01379"/>
    </source>
</evidence>
<accession>Q3C1G3</accession>
<keyword id="KW-0007">Acetylation</keyword>
<keyword id="KW-0106">Calcium</keyword>
<keyword id="KW-0148">Chlorophyll</keyword>
<keyword id="KW-0150">Chloroplast</keyword>
<keyword id="KW-0157">Chromophore</keyword>
<keyword id="KW-0249">Electron transport</keyword>
<keyword id="KW-0359">Herbicide resistance</keyword>
<keyword id="KW-0408">Iron</keyword>
<keyword id="KW-0460">Magnesium</keyword>
<keyword id="KW-0464">Manganese</keyword>
<keyword id="KW-0472">Membrane</keyword>
<keyword id="KW-0479">Metal-binding</keyword>
<keyword id="KW-0560">Oxidoreductase</keyword>
<keyword id="KW-0597">Phosphoprotein</keyword>
<keyword id="KW-0602">Photosynthesis</keyword>
<keyword id="KW-0604">Photosystem II</keyword>
<keyword id="KW-0934">Plastid</keyword>
<keyword id="KW-1185">Reference proteome</keyword>
<keyword id="KW-0793">Thylakoid</keyword>
<keyword id="KW-0812">Transmembrane</keyword>
<keyword id="KW-1133">Transmembrane helix</keyword>
<keyword id="KW-0813">Transport</keyword>
<dbReference type="EC" id="1.10.3.9" evidence="1"/>
<dbReference type="EMBL" id="AB237912">
    <property type="protein sequence ID" value="BAE46626.1"/>
    <property type="molecule type" value="Genomic_DNA"/>
</dbReference>
<dbReference type="RefSeq" id="YP_358651.1">
    <property type="nucleotide sequence ID" value="NC_007500.1"/>
</dbReference>
<dbReference type="SMR" id="Q3C1G3"/>
<dbReference type="GeneID" id="3735101"/>
<dbReference type="KEGG" id="nsy:3735101"/>
<dbReference type="eggNOG" id="ENOG502QU1T">
    <property type="taxonomic scope" value="Eukaryota"/>
</dbReference>
<dbReference type="OrthoDB" id="18954at4085"/>
<dbReference type="Proteomes" id="UP000189701">
    <property type="component" value="Chloroplast Pltd"/>
</dbReference>
<dbReference type="GO" id="GO:0009535">
    <property type="term" value="C:chloroplast thylakoid membrane"/>
    <property type="evidence" value="ECO:0007669"/>
    <property type="project" value="UniProtKB-SubCell"/>
</dbReference>
<dbReference type="GO" id="GO:0009523">
    <property type="term" value="C:photosystem II"/>
    <property type="evidence" value="ECO:0007669"/>
    <property type="project" value="UniProtKB-KW"/>
</dbReference>
<dbReference type="GO" id="GO:0016168">
    <property type="term" value="F:chlorophyll binding"/>
    <property type="evidence" value="ECO:0007669"/>
    <property type="project" value="UniProtKB-UniRule"/>
</dbReference>
<dbReference type="GO" id="GO:0045156">
    <property type="term" value="F:electron transporter, transferring electrons within the cyclic electron transport pathway of photosynthesis activity"/>
    <property type="evidence" value="ECO:0007669"/>
    <property type="project" value="InterPro"/>
</dbReference>
<dbReference type="GO" id="GO:0005506">
    <property type="term" value="F:iron ion binding"/>
    <property type="evidence" value="ECO:0007669"/>
    <property type="project" value="UniProtKB-UniRule"/>
</dbReference>
<dbReference type="GO" id="GO:0016682">
    <property type="term" value="F:oxidoreductase activity, acting on diphenols and related substances as donors, oxygen as acceptor"/>
    <property type="evidence" value="ECO:0007669"/>
    <property type="project" value="UniProtKB-UniRule"/>
</dbReference>
<dbReference type="GO" id="GO:0010242">
    <property type="term" value="F:oxygen evolving activity"/>
    <property type="evidence" value="ECO:0007669"/>
    <property type="project" value="UniProtKB-EC"/>
</dbReference>
<dbReference type="GO" id="GO:0009772">
    <property type="term" value="P:photosynthetic electron transport in photosystem II"/>
    <property type="evidence" value="ECO:0007669"/>
    <property type="project" value="InterPro"/>
</dbReference>
<dbReference type="GO" id="GO:0009635">
    <property type="term" value="P:response to herbicide"/>
    <property type="evidence" value="ECO:0007669"/>
    <property type="project" value="UniProtKB-KW"/>
</dbReference>
<dbReference type="CDD" id="cd09289">
    <property type="entry name" value="Photosystem-II_D1"/>
    <property type="match status" value="1"/>
</dbReference>
<dbReference type="FunFam" id="1.20.85.10:FF:000002">
    <property type="entry name" value="Photosystem II protein D1"/>
    <property type="match status" value="1"/>
</dbReference>
<dbReference type="Gene3D" id="1.20.85.10">
    <property type="entry name" value="Photosystem II protein D1-like"/>
    <property type="match status" value="1"/>
</dbReference>
<dbReference type="HAMAP" id="MF_01379">
    <property type="entry name" value="PSII_PsbA_D1"/>
    <property type="match status" value="1"/>
</dbReference>
<dbReference type="InterPro" id="IPR055266">
    <property type="entry name" value="D1/D2"/>
</dbReference>
<dbReference type="InterPro" id="IPR036854">
    <property type="entry name" value="Photo_II_D1/D2_sf"/>
</dbReference>
<dbReference type="InterPro" id="IPR000484">
    <property type="entry name" value="Photo_RC_L/M"/>
</dbReference>
<dbReference type="InterPro" id="IPR055265">
    <property type="entry name" value="Photo_RC_L/M_CS"/>
</dbReference>
<dbReference type="InterPro" id="IPR005867">
    <property type="entry name" value="PSII_D1"/>
</dbReference>
<dbReference type="NCBIfam" id="TIGR01151">
    <property type="entry name" value="psbA"/>
    <property type="match status" value="1"/>
</dbReference>
<dbReference type="PANTHER" id="PTHR33149:SF12">
    <property type="entry name" value="PHOTOSYSTEM II D2 PROTEIN"/>
    <property type="match status" value="1"/>
</dbReference>
<dbReference type="PANTHER" id="PTHR33149">
    <property type="entry name" value="PHOTOSYSTEM II PROTEIN D1"/>
    <property type="match status" value="1"/>
</dbReference>
<dbReference type="Pfam" id="PF00124">
    <property type="entry name" value="Photo_RC"/>
    <property type="match status" value="1"/>
</dbReference>
<dbReference type="PRINTS" id="PR00256">
    <property type="entry name" value="REACTNCENTRE"/>
</dbReference>
<dbReference type="SUPFAM" id="SSF81483">
    <property type="entry name" value="Bacterial photosystem II reaction centre, L and M subunits"/>
    <property type="match status" value="1"/>
</dbReference>
<dbReference type="PROSITE" id="PS00244">
    <property type="entry name" value="REACTION_CENTER"/>
    <property type="match status" value="1"/>
</dbReference>
<reference key="1">
    <citation type="journal article" date="2006" name="Mol. Genet. Genomics">
        <title>The chloroplast genome of Nicotiana sylvestris and Nicotiana tomentosiformis: complete sequencing confirms that the Nicotiana sylvestris progenitor is the maternal genome donor of Nicotiana tabacum.</title>
        <authorList>
            <person name="Yukawa M."/>
            <person name="Tsudzuki T."/>
            <person name="Sugiura M."/>
        </authorList>
    </citation>
    <scope>NUCLEOTIDE SEQUENCE [LARGE SCALE GENOMIC DNA]</scope>
</reference>
<gene>
    <name evidence="1" type="primary">psbA</name>
</gene>
<comment type="function">
    <text evidence="1">Photosystem II (PSII) is a light-driven water:plastoquinone oxidoreductase that uses light energy to abstract electrons from H(2)O, generating O(2) and a proton gradient subsequently used for ATP formation. It consists of a core antenna complex that captures photons, and an electron transfer chain that converts photonic excitation into a charge separation. The D1/D2 (PsbA/PsbD) reaction center heterodimer binds P680, the primary electron donor of PSII as well as several subsequent electron acceptors.</text>
</comment>
<comment type="catalytic activity">
    <reaction evidence="1">
        <text>2 a plastoquinone + 4 hnu + 2 H2O = 2 a plastoquinol + O2</text>
        <dbReference type="Rhea" id="RHEA:36359"/>
        <dbReference type="Rhea" id="RHEA-COMP:9561"/>
        <dbReference type="Rhea" id="RHEA-COMP:9562"/>
        <dbReference type="ChEBI" id="CHEBI:15377"/>
        <dbReference type="ChEBI" id="CHEBI:15379"/>
        <dbReference type="ChEBI" id="CHEBI:17757"/>
        <dbReference type="ChEBI" id="CHEBI:30212"/>
        <dbReference type="ChEBI" id="CHEBI:62192"/>
        <dbReference type="EC" id="1.10.3.9"/>
    </reaction>
</comment>
<comment type="cofactor">
    <text evidence="1">The D1/D2 heterodimer binds P680, chlorophylls that are the primary electron donor of PSII, and subsequent electron acceptors. It shares a non-heme iron and each subunit binds pheophytin, quinone, additional chlorophylls, carotenoids and lipids. D1 provides most of the ligands for the Mn4-Ca-O5 cluster of the oxygen-evolving complex (OEC). There is also a Cl(-1) ion associated with D1 and D2, which is required for oxygen evolution. The PSII complex binds additional chlorophylls, carotenoids and specific lipids.</text>
</comment>
<comment type="subunit">
    <text evidence="1">PSII is composed of 1 copy each of membrane proteins PsbA, PsbB, PsbC, PsbD, PsbE, PsbF, PsbH, PsbI, PsbJ, PsbK, PsbL, PsbM, PsbT, PsbX, PsbY, PsbZ, Psb30/Ycf12, at least 3 peripheral proteins of the oxygen-evolving complex and a large number of cofactors. It forms dimeric complexes.</text>
</comment>
<comment type="subcellular location">
    <subcellularLocation>
        <location evidence="1">Plastid</location>
        <location evidence="1">Chloroplast thylakoid membrane</location>
        <topology evidence="1">Multi-pass membrane protein</topology>
    </subcellularLocation>
</comment>
<comment type="PTM">
    <text evidence="1">Tyr-161 forms a radical intermediate that is referred to as redox-active TyrZ, YZ or Y-Z.</text>
</comment>
<comment type="PTM">
    <text evidence="1">C-terminally processed by CTPA; processing is essential to allow assembly of the oxygen-evolving complex and thus photosynthetic growth.</text>
</comment>
<comment type="miscellaneous">
    <text evidence="1">2 of the reaction center chlorophylls (ChlD1 and ChlD2) are entirely coordinated by water.</text>
</comment>
<comment type="miscellaneous">
    <text evidence="1">Herbicides such as atrazine, BNT, diuron or ioxynil bind in the Q(B) binding site and block subsequent electron transfer.</text>
</comment>
<comment type="similarity">
    <text evidence="1">Belongs to the reaction center PufL/M/PsbA/D family.</text>
</comment>
<protein>
    <recommendedName>
        <fullName evidence="1">Photosystem II protein D1</fullName>
        <shortName evidence="1">PSII D1 protein</shortName>
        <ecNumber evidence="1">1.10.3.9</ecNumber>
    </recommendedName>
    <alternativeName>
        <fullName evidence="1">Photosystem II Q(B) protein</fullName>
    </alternativeName>
</protein>
<organism>
    <name type="scientific">Nicotiana sylvestris</name>
    <name type="common">Wood tobacco</name>
    <name type="synonym">South American tobacco</name>
    <dbReference type="NCBI Taxonomy" id="4096"/>
    <lineage>
        <taxon>Eukaryota</taxon>
        <taxon>Viridiplantae</taxon>
        <taxon>Streptophyta</taxon>
        <taxon>Embryophyta</taxon>
        <taxon>Tracheophyta</taxon>
        <taxon>Spermatophyta</taxon>
        <taxon>Magnoliopsida</taxon>
        <taxon>eudicotyledons</taxon>
        <taxon>Gunneridae</taxon>
        <taxon>Pentapetalae</taxon>
        <taxon>asterids</taxon>
        <taxon>lamiids</taxon>
        <taxon>Solanales</taxon>
        <taxon>Solanaceae</taxon>
        <taxon>Nicotianoideae</taxon>
        <taxon>Nicotianeae</taxon>
        <taxon>Nicotiana</taxon>
    </lineage>
</organism>
<name>PSBA_NICSY</name>
<sequence>MTAILERRESESLWGRFCNWITSTENRLYIGWFGVLMIPTLLTATSVFIIAFIAAPPVDIDGIREPVSGSLLYGNNIISGAIIPTSAAIGLHFYPIWEAASVDEWLYNGGPYELIVLHFLLGVACYMGREWELSFRLGMRPWIAVAYSAPVAAATAVFLIYPIGQGSFSDGMPLGISGTFNFMIVFQAEHNILMHPFHMLGVAGVFGGSLFSAMHGSLVTSSLIRETTENESANEGYRFGQEEETYNIVAAHGYFGRLIFQYASFNNSRSLHFFLAAWPVVGIWFTALGISTMAFNLNGFNFNQSVVDSQGRVINTWADIINRANLGMEVMHERNAHNFPLDLAAIEAPSTNG</sequence>
<proteinExistence type="inferred from homology"/>
<geneLocation type="chloroplast"/>